<name>IF2_SALTI</name>
<sequence>MTDLTLKALAAERQVSVDRLVQQFADAGIRKSADDSVSAQEKQTLLAHLNREAVSGPDKLTLQRKTRSTLNIPGTGGKSKSVQIEVRKKRTFVKRDPQEAERLAAEEQAQREAEEQARREAEEQAKREAQQKAEREAAEQAKREAAEKAKREAAEKDKVSNQQTDDMTKTAQAEKARRENEAAELKRKAEEEARRKLEEEARRVAEEARRMAEENKWTATPEPVEDTSDYHVTTSQHARQAEDENDREVEGGRGRGRNAKAARPAKKGKHAESKADREEARAAVRGGKGGKRKGSSLQQGFQKPAQAVNRDVVIGETITVGELANKMAVKGSQVIKAMMKLGAMATINQVIDQETAQLVAEEMGHKVILRRENELEEAVMSDRDTGAAAEPRAPVVTIMGHVDHGKTSLLDYIRSTKVASGEAGGITQHIGAYHVETDNGMITFLDTPGHAAFTSMRARGAQATDIVVLVVAADDGVMPQTIEAIQHAKAAGVPVVVAVNKIDKPEADPDRVKNELSQYGILPEEWGGESQFVHVSAKAGTGIDELLDAILLQAEVLELKAVRKGMASGAVIESFLDKGRGPVATVLVREGTLHKGDIVLCGFEYGRVRAMRNELGQEVLEAGPSIPVEILGLSGVPAAGDEVTVVRDEKKAREVALYRQGKFREVKLARQQKSKLENMFVNMTEGEVHEVNIVLKADVQGSVEAISDSLLKLSTDEVKVKIIGSGVGGITETDATLAAASNAILVGFNVRADASARKVIESESLDLRYYSVIYNLIDEVKAAMSGMLSPELKQQIIGLAEVRDVFKSPKFGAIAGCMVTEGTIKRHNPIRVLRDNVVIYEGELESLRRFKDDVNEVRNGMECGIGVKNYNDVRVGDMIEVFEIIEIQRTIA</sequence>
<feature type="chain" id="PRO_0000137245" description="Translation initiation factor IF-2">
    <location>
        <begin position="1"/>
        <end position="892"/>
    </location>
</feature>
<feature type="domain" description="tr-type G">
    <location>
        <begin position="391"/>
        <end position="560"/>
    </location>
</feature>
<feature type="region of interest" description="Disordered" evidence="3">
    <location>
        <begin position="66"/>
        <end position="305"/>
    </location>
</feature>
<feature type="region of interest" description="G1" evidence="1">
    <location>
        <begin position="400"/>
        <end position="407"/>
    </location>
</feature>
<feature type="region of interest" description="G2" evidence="1">
    <location>
        <begin position="425"/>
        <end position="429"/>
    </location>
</feature>
<feature type="region of interest" description="G3" evidence="1">
    <location>
        <begin position="446"/>
        <end position="449"/>
    </location>
</feature>
<feature type="region of interest" description="G4" evidence="1">
    <location>
        <begin position="500"/>
        <end position="503"/>
    </location>
</feature>
<feature type="region of interest" description="G5" evidence="1">
    <location>
        <begin position="536"/>
        <end position="538"/>
    </location>
</feature>
<feature type="compositionally biased region" description="Polar residues" evidence="3">
    <location>
        <begin position="68"/>
        <end position="82"/>
    </location>
</feature>
<feature type="compositionally biased region" description="Basic and acidic residues" evidence="3">
    <location>
        <begin position="93"/>
        <end position="159"/>
    </location>
</feature>
<feature type="compositionally biased region" description="Basic and acidic residues" evidence="3">
    <location>
        <begin position="166"/>
        <end position="216"/>
    </location>
</feature>
<feature type="compositionally biased region" description="Basic residues" evidence="3">
    <location>
        <begin position="254"/>
        <end position="269"/>
    </location>
</feature>
<feature type="compositionally biased region" description="Basic and acidic residues" evidence="3">
    <location>
        <begin position="270"/>
        <end position="282"/>
    </location>
</feature>
<feature type="binding site" evidence="2">
    <location>
        <begin position="400"/>
        <end position="407"/>
    </location>
    <ligand>
        <name>GTP</name>
        <dbReference type="ChEBI" id="CHEBI:37565"/>
    </ligand>
</feature>
<feature type="binding site" evidence="2">
    <location>
        <begin position="446"/>
        <end position="450"/>
    </location>
    <ligand>
        <name>GTP</name>
        <dbReference type="ChEBI" id="CHEBI:37565"/>
    </ligand>
</feature>
<feature type="binding site" evidence="2">
    <location>
        <begin position="500"/>
        <end position="503"/>
    </location>
    <ligand>
        <name>GTP</name>
        <dbReference type="ChEBI" id="CHEBI:37565"/>
    </ligand>
</feature>
<organism>
    <name type="scientific">Salmonella typhi</name>
    <dbReference type="NCBI Taxonomy" id="90370"/>
    <lineage>
        <taxon>Bacteria</taxon>
        <taxon>Pseudomonadati</taxon>
        <taxon>Pseudomonadota</taxon>
        <taxon>Gammaproteobacteria</taxon>
        <taxon>Enterobacterales</taxon>
        <taxon>Enterobacteriaceae</taxon>
        <taxon>Salmonella</taxon>
    </lineage>
</organism>
<evidence type="ECO:0000250" key="1"/>
<evidence type="ECO:0000255" key="2">
    <source>
        <dbReference type="HAMAP-Rule" id="MF_00100"/>
    </source>
</evidence>
<evidence type="ECO:0000256" key="3">
    <source>
        <dbReference type="SAM" id="MobiDB-lite"/>
    </source>
</evidence>
<protein>
    <recommendedName>
        <fullName evidence="2">Translation initiation factor IF-2</fullName>
    </recommendedName>
</protein>
<reference key="1">
    <citation type="journal article" date="2001" name="Nature">
        <title>Complete genome sequence of a multiple drug resistant Salmonella enterica serovar Typhi CT18.</title>
        <authorList>
            <person name="Parkhill J."/>
            <person name="Dougan G."/>
            <person name="James K.D."/>
            <person name="Thomson N.R."/>
            <person name="Pickard D."/>
            <person name="Wain J."/>
            <person name="Churcher C.M."/>
            <person name="Mungall K.L."/>
            <person name="Bentley S.D."/>
            <person name="Holden M.T.G."/>
            <person name="Sebaihia M."/>
            <person name="Baker S."/>
            <person name="Basham D."/>
            <person name="Brooks K."/>
            <person name="Chillingworth T."/>
            <person name="Connerton P."/>
            <person name="Cronin A."/>
            <person name="Davis P."/>
            <person name="Davies R.M."/>
            <person name="Dowd L."/>
            <person name="White N."/>
            <person name="Farrar J."/>
            <person name="Feltwell T."/>
            <person name="Hamlin N."/>
            <person name="Haque A."/>
            <person name="Hien T.T."/>
            <person name="Holroyd S."/>
            <person name="Jagels K."/>
            <person name="Krogh A."/>
            <person name="Larsen T.S."/>
            <person name="Leather S."/>
            <person name="Moule S."/>
            <person name="O'Gaora P."/>
            <person name="Parry C."/>
            <person name="Quail M.A."/>
            <person name="Rutherford K.M."/>
            <person name="Simmonds M."/>
            <person name="Skelton J."/>
            <person name="Stevens K."/>
            <person name="Whitehead S."/>
            <person name="Barrell B.G."/>
        </authorList>
    </citation>
    <scope>NUCLEOTIDE SEQUENCE [LARGE SCALE GENOMIC DNA]</scope>
    <source>
        <strain>CT18</strain>
    </source>
</reference>
<reference key="2">
    <citation type="journal article" date="2003" name="J. Bacteriol.">
        <title>Comparative genomics of Salmonella enterica serovar Typhi strains Ty2 and CT18.</title>
        <authorList>
            <person name="Deng W."/>
            <person name="Liou S.-R."/>
            <person name="Plunkett G. III"/>
            <person name="Mayhew G.F."/>
            <person name="Rose D.J."/>
            <person name="Burland V."/>
            <person name="Kodoyianni V."/>
            <person name="Schwartz D.C."/>
            <person name="Blattner F.R."/>
        </authorList>
    </citation>
    <scope>NUCLEOTIDE SEQUENCE [LARGE SCALE GENOMIC DNA]</scope>
    <source>
        <strain>ATCC 700931 / Ty2</strain>
    </source>
</reference>
<dbReference type="EMBL" id="AL513382">
    <property type="protein sequence ID" value="CAD07806.1"/>
    <property type="molecule type" value="Genomic_DNA"/>
</dbReference>
<dbReference type="EMBL" id="AE014613">
    <property type="protein sequence ID" value="AAO70742.1"/>
    <property type="molecule type" value="Genomic_DNA"/>
</dbReference>
<dbReference type="RefSeq" id="NP_457668.1">
    <property type="nucleotide sequence ID" value="NC_003198.1"/>
</dbReference>
<dbReference type="RefSeq" id="WP_000131175.1">
    <property type="nucleotide sequence ID" value="NZ_WSUR01000003.1"/>
</dbReference>
<dbReference type="SMR" id="Q8Z3H7"/>
<dbReference type="STRING" id="220341.gene:17587317"/>
<dbReference type="KEGG" id="stt:t3204"/>
<dbReference type="KEGG" id="sty:STY3467"/>
<dbReference type="PATRIC" id="fig|220341.7.peg.3529"/>
<dbReference type="eggNOG" id="COG0532">
    <property type="taxonomic scope" value="Bacteria"/>
</dbReference>
<dbReference type="HOGENOM" id="CLU_006301_6_3_6"/>
<dbReference type="OMA" id="RKNPWMN"/>
<dbReference type="OrthoDB" id="9811804at2"/>
<dbReference type="Proteomes" id="UP000000541">
    <property type="component" value="Chromosome"/>
</dbReference>
<dbReference type="Proteomes" id="UP000002670">
    <property type="component" value="Chromosome"/>
</dbReference>
<dbReference type="GO" id="GO:0005829">
    <property type="term" value="C:cytosol"/>
    <property type="evidence" value="ECO:0007669"/>
    <property type="project" value="TreeGrafter"/>
</dbReference>
<dbReference type="GO" id="GO:0005525">
    <property type="term" value="F:GTP binding"/>
    <property type="evidence" value="ECO:0007669"/>
    <property type="project" value="UniProtKB-KW"/>
</dbReference>
<dbReference type="GO" id="GO:0003924">
    <property type="term" value="F:GTPase activity"/>
    <property type="evidence" value="ECO:0007669"/>
    <property type="project" value="UniProtKB-UniRule"/>
</dbReference>
<dbReference type="GO" id="GO:0097216">
    <property type="term" value="F:guanosine tetraphosphate binding"/>
    <property type="evidence" value="ECO:0007669"/>
    <property type="project" value="UniProtKB-ARBA"/>
</dbReference>
<dbReference type="GO" id="GO:0003743">
    <property type="term" value="F:translation initiation factor activity"/>
    <property type="evidence" value="ECO:0007669"/>
    <property type="project" value="UniProtKB-UniRule"/>
</dbReference>
<dbReference type="CDD" id="cd01887">
    <property type="entry name" value="IF2_eIF5B"/>
    <property type="match status" value="1"/>
</dbReference>
<dbReference type="CDD" id="cd03702">
    <property type="entry name" value="IF2_mtIF2_II"/>
    <property type="match status" value="1"/>
</dbReference>
<dbReference type="CDD" id="cd03692">
    <property type="entry name" value="mtIF2_IVc"/>
    <property type="match status" value="1"/>
</dbReference>
<dbReference type="FunFam" id="2.40.30.10:FF:000007">
    <property type="entry name" value="Translation initiation factor IF-2"/>
    <property type="match status" value="1"/>
</dbReference>
<dbReference type="FunFam" id="2.40.30.10:FF:000008">
    <property type="entry name" value="Translation initiation factor IF-2"/>
    <property type="match status" value="1"/>
</dbReference>
<dbReference type="FunFam" id="3.30.56.50:FF:000001">
    <property type="entry name" value="Translation initiation factor IF-2"/>
    <property type="match status" value="1"/>
</dbReference>
<dbReference type="FunFam" id="3.40.50.10050:FF:000001">
    <property type="entry name" value="Translation initiation factor IF-2"/>
    <property type="match status" value="1"/>
</dbReference>
<dbReference type="FunFam" id="3.40.50.300:FF:000019">
    <property type="entry name" value="Translation initiation factor IF-2"/>
    <property type="match status" value="1"/>
</dbReference>
<dbReference type="Gene3D" id="3.40.50.300">
    <property type="entry name" value="P-loop containing nucleotide triphosphate hydrolases"/>
    <property type="match status" value="1"/>
</dbReference>
<dbReference type="Gene3D" id="3.30.56.50">
    <property type="entry name" value="Putative DNA-binding domain, N-terminal subdomain of bacterial translation initiation factor IF2"/>
    <property type="match status" value="1"/>
</dbReference>
<dbReference type="Gene3D" id="2.40.30.10">
    <property type="entry name" value="Translation factors"/>
    <property type="match status" value="2"/>
</dbReference>
<dbReference type="Gene3D" id="3.40.50.10050">
    <property type="entry name" value="Translation initiation factor IF- 2, domain 3"/>
    <property type="match status" value="1"/>
</dbReference>
<dbReference type="HAMAP" id="MF_00100_B">
    <property type="entry name" value="IF_2_B"/>
    <property type="match status" value="1"/>
</dbReference>
<dbReference type="InterPro" id="IPR009061">
    <property type="entry name" value="DNA-bd_dom_put_sf"/>
</dbReference>
<dbReference type="InterPro" id="IPR053905">
    <property type="entry name" value="EF-G-like_DII"/>
</dbReference>
<dbReference type="InterPro" id="IPR004161">
    <property type="entry name" value="EFTu-like_2"/>
</dbReference>
<dbReference type="InterPro" id="IPR013575">
    <property type="entry name" value="IF2_assoc_dom_bac"/>
</dbReference>
<dbReference type="InterPro" id="IPR044145">
    <property type="entry name" value="IF2_II"/>
</dbReference>
<dbReference type="InterPro" id="IPR006847">
    <property type="entry name" value="IF2_N"/>
</dbReference>
<dbReference type="InterPro" id="IPR027417">
    <property type="entry name" value="P-loop_NTPase"/>
</dbReference>
<dbReference type="InterPro" id="IPR005225">
    <property type="entry name" value="Small_GTP-bd"/>
</dbReference>
<dbReference type="InterPro" id="IPR000795">
    <property type="entry name" value="T_Tr_GTP-bd_dom"/>
</dbReference>
<dbReference type="InterPro" id="IPR000178">
    <property type="entry name" value="TF_IF2_bacterial-like"/>
</dbReference>
<dbReference type="InterPro" id="IPR015760">
    <property type="entry name" value="TIF_IF2"/>
</dbReference>
<dbReference type="InterPro" id="IPR023115">
    <property type="entry name" value="TIF_IF2_dom3"/>
</dbReference>
<dbReference type="InterPro" id="IPR036925">
    <property type="entry name" value="TIF_IF2_dom3_sf"/>
</dbReference>
<dbReference type="InterPro" id="IPR009000">
    <property type="entry name" value="Transl_B-barrel_sf"/>
</dbReference>
<dbReference type="NCBIfam" id="TIGR00487">
    <property type="entry name" value="IF-2"/>
    <property type="match status" value="1"/>
</dbReference>
<dbReference type="NCBIfam" id="TIGR00231">
    <property type="entry name" value="small_GTP"/>
    <property type="match status" value="1"/>
</dbReference>
<dbReference type="PANTHER" id="PTHR43381:SF5">
    <property type="entry name" value="TR-TYPE G DOMAIN-CONTAINING PROTEIN"/>
    <property type="match status" value="1"/>
</dbReference>
<dbReference type="PANTHER" id="PTHR43381">
    <property type="entry name" value="TRANSLATION INITIATION FACTOR IF-2-RELATED"/>
    <property type="match status" value="1"/>
</dbReference>
<dbReference type="Pfam" id="PF22042">
    <property type="entry name" value="EF-G_D2"/>
    <property type="match status" value="1"/>
</dbReference>
<dbReference type="Pfam" id="PF00009">
    <property type="entry name" value="GTP_EFTU"/>
    <property type="match status" value="1"/>
</dbReference>
<dbReference type="Pfam" id="PF03144">
    <property type="entry name" value="GTP_EFTU_D2"/>
    <property type="match status" value="1"/>
</dbReference>
<dbReference type="Pfam" id="PF11987">
    <property type="entry name" value="IF-2"/>
    <property type="match status" value="1"/>
</dbReference>
<dbReference type="Pfam" id="PF08364">
    <property type="entry name" value="IF2_assoc"/>
    <property type="match status" value="1"/>
</dbReference>
<dbReference type="Pfam" id="PF04760">
    <property type="entry name" value="IF2_N"/>
    <property type="match status" value="2"/>
</dbReference>
<dbReference type="SUPFAM" id="SSF52156">
    <property type="entry name" value="Initiation factor IF2/eIF5b, domain 3"/>
    <property type="match status" value="1"/>
</dbReference>
<dbReference type="SUPFAM" id="SSF52540">
    <property type="entry name" value="P-loop containing nucleoside triphosphate hydrolases"/>
    <property type="match status" value="1"/>
</dbReference>
<dbReference type="SUPFAM" id="SSF46955">
    <property type="entry name" value="Putative DNA-binding domain"/>
    <property type="match status" value="1"/>
</dbReference>
<dbReference type="SUPFAM" id="SSF50447">
    <property type="entry name" value="Translation proteins"/>
    <property type="match status" value="2"/>
</dbReference>
<dbReference type="PROSITE" id="PS51722">
    <property type="entry name" value="G_TR_2"/>
    <property type="match status" value="1"/>
</dbReference>
<dbReference type="PROSITE" id="PS01176">
    <property type="entry name" value="IF2"/>
    <property type="match status" value="1"/>
</dbReference>
<accession>Q8Z3H7</accession>
<proteinExistence type="inferred from homology"/>
<gene>
    <name evidence="2" type="primary">infB</name>
    <name type="ordered locus">STY3467</name>
    <name type="ordered locus">t3204</name>
</gene>
<keyword id="KW-0963">Cytoplasm</keyword>
<keyword id="KW-0342">GTP-binding</keyword>
<keyword id="KW-0396">Initiation factor</keyword>
<keyword id="KW-0547">Nucleotide-binding</keyword>
<keyword id="KW-0648">Protein biosynthesis</keyword>
<comment type="function">
    <text evidence="2">One of the essential components for the initiation of protein synthesis. Protects formylmethionyl-tRNA from spontaneous hydrolysis and promotes its binding to the 30S ribosomal subunits. Also involved in the hydrolysis of GTP during the formation of the 70S ribosomal complex.</text>
</comment>
<comment type="subcellular location">
    <subcellularLocation>
        <location evidence="2">Cytoplasm</location>
    </subcellularLocation>
</comment>
<comment type="similarity">
    <text evidence="2">Belongs to the TRAFAC class translation factor GTPase superfamily. Classic translation factor GTPase family. IF-2 subfamily.</text>
</comment>